<keyword id="KW-0004">4Fe-4S</keyword>
<keyword id="KW-0148">Chlorophyll</keyword>
<keyword id="KW-0150">Chloroplast</keyword>
<keyword id="KW-0157">Chromophore</keyword>
<keyword id="KW-0249">Electron transport</keyword>
<keyword id="KW-0408">Iron</keyword>
<keyword id="KW-0411">Iron-sulfur</keyword>
<keyword id="KW-0460">Magnesium</keyword>
<keyword id="KW-0472">Membrane</keyword>
<keyword id="KW-0479">Metal-binding</keyword>
<keyword id="KW-0560">Oxidoreductase</keyword>
<keyword id="KW-0602">Photosynthesis</keyword>
<keyword id="KW-0603">Photosystem I</keyword>
<keyword id="KW-0934">Plastid</keyword>
<keyword id="KW-1185">Reference proteome</keyword>
<keyword id="KW-0793">Thylakoid</keyword>
<keyword id="KW-0812">Transmembrane</keyword>
<keyword id="KW-1133">Transmembrane helix</keyword>
<keyword id="KW-0813">Transport</keyword>
<feature type="chain" id="PRO_0000300055" description="Photosystem I P700 chlorophyll a apoprotein A2">
    <location>
        <begin position="1"/>
        <end position="734"/>
    </location>
</feature>
<feature type="transmembrane region" description="Helical; Name=I" evidence="1">
    <location>
        <begin position="46"/>
        <end position="69"/>
    </location>
</feature>
<feature type="transmembrane region" description="Helical; Name=II" evidence="1">
    <location>
        <begin position="135"/>
        <end position="158"/>
    </location>
</feature>
<feature type="transmembrane region" description="Helical; Name=III" evidence="1">
    <location>
        <begin position="175"/>
        <end position="199"/>
    </location>
</feature>
<feature type="transmembrane region" description="Helical; Name=IV" evidence="1">
    <location>
        <begin position="273"/>
        <end position="291"/>
    </location>
</feature>
<feature type="transmembrane region" description="Helical; Name=V" evidence="1">
    <location>
        <begin position="330"/>
        <end position="353"/>
    </location>
</feature>
<feature type="transmembrane region" description="Helical; Name=VI" evidence="1">
    <location>
        <begin position="369"/>
        <end position="395"/>
    </location>
</feature>
<feature type="transmembrane region" description="Helical; Name=VII" evidence="1">
    <location>
        <begin position="417"/>
        <end position="439"/>
    </location>
</feature>
<feature type="transmembrane region" description="Helical; Name=VIII" evidence="1">
    <location>
        <begin position="517"/>
        <end position="535"/>
    </location>
</feature>
<feature type="transmembrane region" description="Helical; Name=IX" evidence="1">
    <location>
        <begin position="575"/>
        <end position="596"/>
    </location>
</feature>
<feature type="transmembrane region" description="Helical; Name=X" evidence="1">
    <location>
        <begin position="643"/>
        <end position="665"/>
    </location>
</feature>
<feature type="transmembrane region" description="Helical; Name=XI" evidence="1">
    <location>
        <begin position="707"/>
        <end position="727"/>
    </location>
</feature>
<feature type="binding site" evidence="1">
    <location>
        <position position="559"/>
    </location>
    <ligand>
        <name>[4Fe-4S] cluster</name>
        <dbReference type="ChEBI" id="CHEBI:49883"/>
        <note>ligand shared between dimeric partners</note>
    </ligand>
</feature>
<feature type="binding site" evidence="1">
    <location>
        <position position="568"/>
    </location>
    <ligand>
        <name>[4Fe-4S] cluster</name>
        <dbReference type="ChEBI" id="CHEBI:49883"/>
        <note>ligand shared between dimeric partners</note>
    </ligand>
</feature>
<feature type="binding site" description="axial binding residue" evidence="1">
    <location>
        <position position="654"/>
    </location>
    <ligand>
        <name>chlorophyll a</name>
        <dbReference type="ChEBI" id="CHEBI:58416"/>
        <label>B1</label>
    </ligand>
    <ligandPart>
        <name>Mg</name>
        <dbReference type="ChEBI" id="CHEBI:25107"/>
    </ligandPart>
</feature>
<feature type="binding site" description="axial binding residue" evidence="1">
    <location>
        <position position="662"/>
    </location>
    <ligand>
        <name>chlorophyll a</name>
        <dbReference type="ChEBI" id="CHEBI:58416"/>
        <label>B3</label>
    </ligand>
    <ligandPart>
        <name>Mg</name>
        <dbReference type="ChEBI" id="CHEBI:25107"/>
    </ligandPart>
</feature>
<feature type="binding site" evidence="1">
    <location>
        <position position="670"/>
    </location>
    <ligand>
        <name>chlorophyll a</name>
        <dbReference type="ChEBI" id="CHEBI:58416"/>
        <label>B3</label>
    </ligand>
</feature>
<feature type="binding site" evidence="1">
    <location>
        <position position="671"/>
    </location>
    <ligand>
        <name>phylloquinone</name>
        <dbReference type="ChEBI" id="CHEBI:18067"/>
        <label>B</label>
    </ligand>
</feature>
<accession>A4GYQ9</accession>
<dbReference type="EC" id="1.97.1.12" evidence="1"/>
<dbReference type="EMBL" id="EF489041">
    <property type="protein sequence ID" value="ABO36703.1"/>
    <property type="molecule type" value="Genomic_DNA"/>
</dbReference>
<dbReference type="RefSeq" id="YP_001109500.1">
    <property type="nucleotide sequence ID" value="NC_009143.1"/>
</dbReference>
<dbReference type="SMR" id="A4GYQ9"/>
<dbReference type="FunCoup" id="A4GYQ9">
    <property type="interactions" value="388"/>
</dbReference>
<dbReference type="STRING" id="3694.A4GYQ9"/>
<dbReference type="EnsemblPlants" id="Potri.013G142124.1.v4.1">
    <property type="protein sequence ID" value="Potri.013G142124.1.v4.1"/>
    <property type="gene ID" value="Potri.013G142124.v4.1"/>
</dbReference>
<dbReference type="GeneID" id="4929662"/>
<dbReference type="Gramene" id="Potri.013G142124.1.v4.1">
    <property type="protein sequence ID" value="Potri.013G142124.1.v4.1"/>
    <property type="gene ID" value="Potri.013G142124.v4.1"/>
</dbReference>
<dbReference type="KEGG" id="pop:4929662"/>
<dbReference type="InParanoid" id="A4GYQ9"/>
<dbReference type="OMA" id="EQWVADP"/>
<dbReference type="OrthoDB" id="349at2759"/>
<dbReference type="Proteomes" id="UP000006729">
    <property type="component" value="Chloroplast"/>
</dbReference>
<dbReference type="ExpressionAtlas" id="A4GYQ9">
    <property type="expression patterns" value="differential"/>
</dbReference>
<dbReference type="GO" id="GO:0009535">
    <property type="term" value="C:chloroplast thylakoid membrane"/>
    <property type="evidence" value="ECO:0007669"/>
    <property type="project" value="UniProtKB-SubCell"/>
</dbReference>
<dbReference type="GO" id="GO:0009522">
    <property type="term" value="C:photosystem I"/>
    <property type="evidence" value="ECO:0007669"/>
    <property type="project" value="UniProtKB-KW"/>
</dbReference>
<dbReference type="GO" id="GO:0051539">
    <property type="term" value="F:4 iron, 4 sulfur cluster binding"/>
    <property type="evidence" value="ECO:0007669"/>
    <property type="project" value="UniProtKB-KW"/>
</dbReference>
<dbReference type="GO" id="GO:0016168">
    <property type="term" value="F:chlorophyll binding"/>
    <property type="evidence" value="ECO:0007669"/>
    <property type="project" value="UniProtKB-KW"/>
</dbReference>
<dbReference type="GO" id="GO:0009055">
    <property type="term" value="F:electron transfer activity"/>
    <property type="evidence" value="ECO:0007669"/>
    <property type="project" value="UniProtKB-UniRule"/>
</dbReference>
<dbReference type="GO" id="GO:0000287">
    <property type="term" value="F:magnesium ion binding"/>
    <property type="evidence" value="ECO:0007669"/>
    <property type="project" value="UniProtKB-UniRule"/>
</dbReference>
<dbReference type="GO" id="GO:0003729">
    <property type="term" value="F:mRNA binding"/>
    <property type="evidence" value="ECO:0007669"/>
    <property type="project" value="EnsemblPlants"/>
</dbReference>
<dbReference type="GO" id="GO:0016491">
    <property type="term" value="F:oxidoreductase activity"/>
    <property type="evidence" value="ECO:0007669"/>
    <property type="project" value="UniProtKB-KW"/>
</dbReference>
<dbReference type="GO" id="GO:0015979">
    <property type="term" value="P:photosynthesis"/>
    <property type="evidence" value="ECO:0007669"/>
    <property type="project" value="UniProtKB-UniRule"/>
</dbReference>
<dbReference type="FunFam" id="1.20.1130.10:FF:000001">
    <property type="entry name" value="Photosystem I P700 chlorophyll a apoprotein A2"/>
    <property type="match status" value="1"/>
</dbReference>
<dbReference type="Gene3D" id="1.20.1130.10">
    <property type="entry name" value="Photosystem I PsaA/PsaB"/>
    <property type="match status" value="1"/>
</dbReference>
<dbReference type="HAMAP" id="MF_00482">
    <property type="entry name" value="PSI_PsaB"/>
    <property type="match status" value="1"/>
</dbReference>
<dbReference type="InterPro" id="IPR001280">
    <property type="entry name" value="PSI_PsaA/B"/>
</dbReference>
<dbReference type="InterPro" id="IPR020586">
    <property type="entry name" value="PSI_PsaA/B_CS"/>
</dbReference>
<dbReference type="InterPro" id="IPR036408">
    <property type="entry name" value="PSI_PsaA/B_sf"/>
</dbReference>
<dbReference type="InterPro" id="IPR006244">
    <property type="entry name" value="PSI_PsaB"/>
</dbReference>
<dbReference type="NCBIfam" id="TIGR01336">
    <property type="entry name" value="psaB"/>
    <property type="match status" value="1"/>
</dbReference>
<dbReference type="PANTHER" id="PTHR30128">
    <property type="entry name" value="OUTER MEMBRANE PROTEIN, OMPA-RELATED"/>
    <property type="match status" value="1"/>
</dbReference>
<dbReference type="PANTHER" id="PTHR30128:SF19">
    <property type="entry name" value="PHOTOSYSTEM I P700 CHLOROPHYLL A APOPROTEIN A1-RELATED"/>
    <property type="match status" value="1"/>
</dbReference>
<dbReference type="Pfam" id="PF00223">
    <property type="entry name" value="PsaA_PsaB"/>
    <property type="match status" value="1"/>
</dbReference>
<dbReference type="PIRSF" id="PIRSF002905">
    <property type="entry name" value="PSI_A"/>
    <property type="match status" value="1"/>
</dbReference>
<dbReference type="PRINTS" id="PR00257">
    <property type="entry name" value="PHOTSYSPSAAB"/>
</dbReference>
<dbReference type="SUPFAM" id="SSF81558">
    <property type="entry name" value="Photosystem I subunits PsaA/PsaB"/>
    <property type="match status" value="1"/>
</dbReference>
<dbReference type="PROSITE" id="PS00419">
    <property type="entry name" value="PHOTOSYSTEM_I_PSAAB"/>
    <property type="match status" value="1"/>
</dbReference>
<reference key="1">
    <citation type="journal article" date="2006" name="Science">
        <title>The genome of black cottonwood, Populus trichocarpa (Torr. &amp; Gray).</title>
        <authorList>
            <person name="Tuskan G.A."/>
            <person name="Difazio S."/>
            <person name="Jansson S."/>
            <person name="Bohlmann J."/>
            <person name="Grigoriev I."/>
            <person name="Hellsten U."/>
            <person name="Putnam N."/>
            <person name="Ralph S."/>
            <person name="Rombauts S."/>
            <person name="Salamov A."/>
            <person name="Schein J."/>
            <person name="Sterck L."/>
            <person name="Aerts A."/>
            <person name="Bhalerao R.R."/>
            <person name="Bhalerao R.P."/>
            <person name="Blaudez D."/>
            <person name="Boerjan W."/>
            <person name="Brun A."/>
            <person name="Brunner A."/>
            <person name="Busov V."/>
            <person name="Campbell M."/>
            <person name="Carlson J."/>
            <person name="Chalot M."/>
            <person name="Chapman J."/>
            <person name="Chen G.-L."/>
            <person name="Cooper D."/>
            <person name="Coutinho P.M."/>
            <person name="Couturier J."/>
            <person name="Covert S."/>
            <person name="Cronk Q."/>
            <person name="Cunningham R."/>
            <person name="Davis J."/>
            <person name="Degroeve S."/>
            <person name="Dejardin A."/>
            <person name="dePamphilis C.W."/>
            <person name="Detter J."/>
            <person name="Dirks B."/>
            <person name="Dubchak I."/>
            <person name="Duplessis S."/>
            <person name="Ehlting J."/>
            <person name="Ellis B."/>
            <person name="Gendler K."/>
            <person name="Goodstein D."/>
            <person name="Gribskov M."/>
            <person name="Grimwood J."/>
            <person name="Groover A."/>
            <person name="Gunter L."/>
            <person name="Hamberger B."/>
            <person name="Heinze B."/>
            <person name="Helariutta Y."/>
            <person name="Henrissat B."/>
            <person name="Holligan D."/>
            <person name="Holt R."/>
            <person name="Huang W."/>
            <person name="Islam-Faridi N."/>
            <person name="Jones S."/>
            <person name="Jones-Rhoades M."/>
            <person name="Jorgensen R."/>
            <person name="Joshi C."/>
            <person name="Kangasjaervi J."/>
            <person name="Karlsson J."/>
            <person name="Kelleher C."/>
            <person name="Kirkpatrick R."/>
            <person name="Kirst M."/>
            <person name="Kohler A."/>
            <person name="Kalluri U."/>
            <person name="Larimer F."/>
            <person name="Leebens-Mack J."/>
            <person name="Leple J.-C."/>
            <person name="Locascio P."/>
            <person name="Lou Y."/>
            <person name="Lucas S."/>
            <person name="Martin F."/>
            <person name="Montanini B."/>
            <person name="Napoli C."/>
            <person name="Nelson D.R."/>
            <person name="Nelson C."/>
            <person name="Nieminen K."/>
            <person name="Nilsson O."/>
            <person name="Pereda V."/>
            <person name="Peter G."/>
            <person name="Philippe R."/>
            <person name="Pilate G."/>
            <person name="Poliakov A."/>
            <person name="Razumovskaya J."/>
            <person name="Richardson P."/>
            <person name="Rinaldi C."/>
            <person name="Ritland K."/>
            <person name="Rouze P."/>
            <person name="Ryaboy D."/>
            <person name="Schmutz J."/>
            <person name="Schrader J."/>
            <person name="Segerman B."/>
            <person name="Shin H."/>
            <person name="Siddiqui A."/>
            <person name="Sterky F."/>
            <person name="Terry A."/>
            <person name="Tsai C.-J."/>
            <person name="Uberbacher E."/>
            <person name="Unneberg P."/>
            <person name="Vahala J."/>
            <person name="Wall K."/>
            <person name="Wessler S."/>
            <person name="Yang G."/>
            <person name="Yin T."/>
            <person name="Douglas C."/>
            <person name="Marra M."/>
            <person name="Sandberg G."/>
            <person name="Van de Peer Y."/>
            <person name="Rokhsar D.S."/>
        </authorList>
    </citation>
    <scope>NUCLEOTIDE SEQUENCE [LARGE SCALE GENOMIC DNA]</scope>
    <source>
        <strain>cv. Nisqually</strain>
    </source>
</reference>
<gene>
    <name evidence="1" type="primary">psaB</name>
    <name type="ordered locus">Poptr_cp021</name>
</gene>
<evidence type="ECO:0000255" key="1">
    <source>
        <dbReference type="HAMAP-Rule" id="MF_00482"/>
    </source>
</evidence>
<name>PSAB_POPTR</name>
<protein>
    <recommendedName>
        <fullName evidence="1">Photosystem I P700 chlorophyll a apoprotein A2</fullName>
        <ecNumber evidence="1">1.97.1.12</ecNumber>
    </recommendedName>
    <alternativeName>
        <fullName evidence="1">PSI-B</fullName>
    </alternativeName>
    <alternativeName>
        <fullName evidence="1">PsaB</fullName>
    </alternativeName>
</protein>
<sequence>MALRFPRFSQGLAQDPTTRRIWFGIATAHDFESHDDITEERLYQNIFASHFGQLAIIFLWTSGNLFHVAWQGNFETWVQDPLHVRPIAHAIWDPHFGQPAVEAFTRGGALGPVNIAYSGVYQWWYTIGLRTNEDLYIGALFLLFLSAVSLLGGWLHLQPKWKPSVSWFKNAESRLNHHLSGLFGVSSLAWTGHLVHVAIPGSRGESVRWNNFLDVLPHPQGLGPLFTGQWNLYAQNPDSSSHLFGTSQGAGTAILTLLGGFHPQTQSLWLTDMAHHHLAIAFLFLIAGHMYRTNFGIGHSIKDLLEAHIPPGGRLGRGHKGLYDTINNSLHFQLGLALASLGVITSLVAQHMYSLPAYAFIAQDFTTQAALYTHHQYIAGFIMTGAFAHGAIFFIRDYNPEQNEDNVLARMLDHKEAIISHLSWASLFLGFHTLGLYVHNDVMLAFGTPEKQILIEPIFAQWIQSAHGKTSYGFDVLLSSTNSPAFNAGRSIWLPGWLNAINENSNSLFLTIGPGDFLVHHAIALGLHTTTLILVKGALDARGSKLMPDKKDFGYSFPCDGPGRGGTCDISAWDAFYLAVFWMLNTIGWVTFYWHWKHITLWQGNVSQFNESSTYLMGWLRDYLWLNSSQLINGYNPFGMNSLSVWAWMFLFGHLVWATGFMFLISWRGYWQELIETLAWAHERTPLANLIRWRDKPVALSIVQARLVGLAHFSVGYIFTYAAFLIASTSGKFG</sequence>
<organism>
    <name type="scientific">Populus trichocarpa</name>
    <name type="common">Western balsam poplar</name>
    <name type="synonym">Populus balsamifera subsp. trichocarpa</name>
    <dbReference type="NCBI Taxonomy" id="3694"/>
    <lineage>
        <taxon>Eukaryota</taxon>
        <taxon>Viridiplantae</taxon>
        <taxon>Streptophyta</taxon>
        <taxon>Embryophyta</taxon>
        <taxon>Tracheophyta</taxon>
        <taxon>Spermatophyta</taxon>
        <taxon>Magnoliopsida</taxon>
        <taxon>eudicotyledons</taxon>
        <taxon>Gunneridae</taxon>
        <taxon>Pentapetalae</taxon>
        <taxon>rosids</taxon>
        <taxon>fabids</taxon>
        <taxon>Malpighiales</taxon>
        <taxon>Salicaceae</taxon>
        <taxon>Saliceae</taxon>
        <taxon>Populus</taxon>
    </lineage>
</organism>
<comment type="function">
    <text evidence="1">PsaA and PsaB bind P700, the primary electron donor of photosystem I (PSI), as well as the electron acceptors A0, A1 and FX. PSI is a plastocyanin-ferredoxin oxidoreductase, converting photonic excitation into a charge separation, which transfers an electron from the donor P700 chlorophyll pair to the spectroscopically characterized acceptors A0, A1, FX, FA and FB in turn. Oxidized P700 is reduced on the lumenal side of the thylakoid membrane by plastocyanin.</text>
</comment>
<comment type="catalytic activity">
    <reaction evidence="1">
        <text>reduced [plastocyanin] + hnu + oxidized [2Fe-2S]-[ferredoxin] = oxidized [plastocyanin] + reduced [2Fe-2S]-[ferredoxin]</text>
        <dbReference type="Rhea" id="RHEA:30407"/>
        <dbReference type="Rhea" id="RHEA-COMP:10000"/>
        <dbReference type="Rhea" id="RHEA-COMP:10001"/>
        <dbReference type="Rhea" id="RHEA-COMP:10039"/>
        <dbReference type="Rhea" id="RHEA-COMP:10040"/>
        <dbReference type="ChEBI" id="CHEBI:29036"/>
        <dbReference type="ChEBI" id="CHEBI:30212"/>
        <dbReference type="ChEBI" id="CHEBI:33737"/>
        <dbReference type="ChEBI" id="CHEBI:33738"/>
        <dbReference type="ChEBI" id="CHEBI:49552"/>
        <dbReference type="EC" id="1.97.1.12"/>
    </reaction>
</comment>
<comment type="cofactor">
    <text evidence="1">P700 is a chlorophyll a/chlorophyll a' dimer, A0 is one or more chlorophyll a, A1 is one or both phylloquinones and FX is a shared 4Fe-4S iron-sulfur center.</text>
</comment>
<comment type="subunit">
    <text evidence="1">The PsaA/B heterodimer binds the P700 chlorophyll special pair and subsequent electron acceptors. PSI consists of a core antenna complex that captures photons, and an electron transfer chain that converts photonic excitation into a charge separation. The eukaryotic PSI reaction center is composed of at least 11 subunits.</text>
</comment>
<comment type="subcellular location">
    <subcellularLocation>
        <location evidence="1">Plastid</location>
        <location evidence="1">Chloroplast thylakoid membrane</location>
        <topology evidence="1">Multi-pass membrane protein</topology>
    </subcellularLocation>
</comment>
<comment type="similarity">
    <text evidence="1">Belongs to the PsaA/PsaB family.</text>
</comment>
<proteinExistence type="inferred from homology"/>
<geneLocation type="chloroplast"/>